<accession>B2GJ19</accession>
<proteinExistence type="inferred from homology"/>
<keyword id="KW-1185">Reference proteome</keyword>
<keyword id="KW-0687">Ribonucleoprotein</keyword>
<keyword id="KW-0689">Ribosomal protein</keyword>
<keyword id="KW-0694">RNA-binding</keyword>
<keyword id="KW-0699">rRNA-binding</keyword>
<feature type="chain" id="PRO_1000165551" description="Small ribosomal subunit protein uS11">
    <location>
        <begin position="1"/>
        <end position="134"/>
    </location>
</feature>
<feature type="region of interest" description="Disordered" evidence="2">
    <location>
        <begin position="1"/>
        <end position="22"/>
    </location>
</feature>
<feature type="compositionally biased region" description="Basic residues" evidence="2">
    <location>
        <begin position="9"/>
        <end position="18"/>
    </location>
</feature>
<reference key="1">
    <citation type="journal article" date="2008" name="J. Bacteriol.">
        <title>Complete genome sequence of the soil actinomycete Kocuria rhizophila.</title>
        <authorList>
            <person name="Takarada H."/>
            <person name="Sekine M."/>
            <person name="Kosugi H."/>
            <person name="Matsuo Y."/>
            <person name="Fujisawa T."/>
            <person name="Omata S."/>
            <person name="Kishi E."/>
            <person name="Shimizu A."/>
            <person name="Tsukatani N."/>
            <person name="Tanikawa S."/>
            <person name="Fujita N."/>
            <person name="Harayama S."/>
        </authorList>
    </citation>
    <scope>NUCLEOTIDE SEQUENCE [LARGE SCALE GENOMIC DNA]</scope>
    <source>
        <strain>ATCC 9341 / DSM 348 / NBRC 103217 / DC2201</strain>
    </source>
</reference>
<comment type="function">
    <text evidence="1">Located on the platform of the 30S subunit, it bridges several disparate RNA helices of the 16S rRNA. Forms part of the Shine-Dalgarno cleft in the 70S ribosome.</text>
</comment>
<comment type="subunit">
    <text evidence="1">Part of the 30S ribosomal subunit. Interacts with proteins S7 and S18. Binds to IF-3.</text>
</comment>
<comment type="similarity">
    <text evidence="1">Belongs to the universal ribosomal protein uS11 family.</text>
</comment>
<organism>
    <name type="scientific">Kocuria rhizophila (strain ATCC 9341 / DSM 348 / NBRC 103217 / DC2201)</name>
    <dbReference type="NCBI Taxonomy" id="378753"/>
    <lineage>
        <taxon>Bacteria</taxon>
        <taxon>Bacillati</taxon>
        <taxon>Actinomycetota</taxon>
        <taxon>Actinomycetes</taxon>
        <taxon>Micrococcales</taxon>
        <taxon>Micrococcaceae</taxon>
        <taxon>Kocuria</taxon>
    </lineage>
</organism>
<dbReference type="EMBL" id="AP009152">
    <property type="protein sequence ID" value="BAG28989.1"/>
    <property type="molecule type" value="Genomic_DNA"/>
</dbReference>
<dbReference type="RefSeq" id="WP_012397714.1">
    <property type="nucleotide sequence ID" value="NZ_VECX01000001.1"/>
</dbReference>
<dbReference type="SMR" id="B2GJ19"/>
<dbReference type="STRING" id="378753.KRH_06420"/>
<dbReference type="GeneID" id="93240998"/>
<dbReference type="KEGG" id="krh:KRH_06420"/>
<dbReference type="eggNOG" id="COG0100">
    <property type="taxonomic scope" value="Bacteria"/>
</dbReference>
<dbReference type="HOGENOM" id="CLU_072439_5_0_11"/>
<dbReference type="OrthoDB" id="9806415at2"/>
<dbReference type="Proteomes" id="UP000008838">
    <property type="component" value="Chromosome"/>
</dbReference>
<dbReference type="GO" id="GO:1990904">
    <property type="term" value="C:ribonucleoprotein complex"/>
    <property type="evidence" value="ECO:0007669"/>
    <property type="project" value="UniProtKB-KW"/>
</dbReference>
<dbReference type="GO" id="GO:0005840">
    <property type="term" value="C:ribosome"/>
    <property type="evidence" value="ECO:0007669"/>
    <property type="project" value="UniProtKB-KW"/>
</dbReference>
<dbReference type="GO" id="GO:0019843">
    <property type="term" value="F:rRNA binding"/>
    <property type="evidence" value="ECO:0007669"/>
    <property type="project" value="UniProtKB-UniRule"/>
</dbReference>
<dbReference type="GO" id="GO:0003735">
    <property type="term" value="F:structural constituent of ribosome"/>
    <property type="evidence" value="ECO:0007669"/>
    <property type="project" value="InterPro"/>
</dbReference>
<dbReference type="GO" id="GO:0006412">
    <property type="term" value="P:translation"/>
    <property type="evidence" value="ECO:0007669"/>
    <property type="project" value="UniProtKB-UniRule"/>
</dbReference>
<dbReference type="FunFam" id="3.30.420.80:FF:000001">
    <property type="entry name" value="30S ribosomal protein S11"/>
    <property type="match status" value="1"/>
</dbReference>
<dbReference type="Gene3D" id="3.30.420.80">
    <property type="entry name" value="Ribosomal protein S11"/>
    <property type="match status" value="1"/>
</dbReference>
<dbReference type="HAMAP" id="MF_01310">
    <property type="entry name" value="Ribosomal_uS11"/>
    <property type="match status" value="1"/>
</dbReference>
<dbReference type="InterPro" id="IPR001971">
    <property type="entry name" value="Ribosomal_uS11"/>
</dbReference>
<dbReference type="InterPro" id="IPR019981">
    <property type="entry name" value="Ribosomal_uS11_bac-type"/>
</dbReference>
<dbReference type="InterPro" id="IPR018102">
    <property type="entry name" value="Ribosomal_uS11_CS"/>
</dbReference>
<dbReference type="InterPro" id="IPR036967">
    <property type="entry name" value="Ribosomal_uS11_sf"/>
</dbReference>
<dbReference type="NCBIfam" id="NF003698">
    <property type="entry name" value="PRK05309.1"/>
    <property type="match status" value="1"/>
</dbReference>
<dbReference type="NCBIfam" id="TIGR03632">
    <property type="entry name" value="uS11_bact"/>
    <property type="match status" value="1"/>
</dbReference>
<dbReference type="PANTHER" id="PTHR11759">
    <property type="entry name" value="40S RIBOSOMAL PROTEIN S14/30S RIBOSOMAL PROTEIN S11"/>
    <property type="match status" value="1"/>
</dbReference>
<dbReference type="Pfam" id="PF00411">
    <property type="entry name" value="Ribosomal_S11"/>
    <property type="match status" value="1"/>
</dbReference>
<dbReference type="PIRSF" id="PIRSF002131">
    <property type="entry name" value="Ribosomal_S11"/>
    <property type="match status" value="1"/>
</dbReference>
<dbReference type="SUPFAM" id="SSF53137">
    <property type="entry name" value="Translational machinery components"/>
    <property type="match status" value="1"/>
</dbReference>
<dbReference type="PROSITE" id="PS00054">
    <property type="entry name" value="RIBOSOMAL_S11"/>
    <property type="match status" value="1"/>
</dbReference>
<evidence type="ECO:0000255" key="1">
    <source>
        <dbReference type="HAMAP-Rule" id="MF_01310"/>
    </source>
</evidence>
<evidence type="ECO:0000256" key="2">
    <source>
        <dbReference type="SAM" id="MobiDB-lite"/>
    </source>
</evidence>
<evidence type="ECO:0000305" key="3"/>
<sequence>MAQKTRATAARKPRRKVNKNVTQGQAHIKSTFNNTIVSITDPSGAVLSWASAGGMGFKGSRKSTPFAAQQAAEAAAKGAQEHGMRKVDVFVKGPGSGRETAIRALQATGLEVGSIQDVTPSAHNGCRPPKRRRV</sequence>
<protein>
    <recommendedName>
        <fullName evidence="1">Small ribosomal subunit protein uS11</fullName>
    </recommendedName>
    <alternativeName>
        <fullName evidence="3">30S ribosomal protein S11</fullName>
    </alternativeName>
</protein>
<name>RS11_KOCRD</name>
<gene>
    <name evidence="1" type="primary">rpsK</name>
    <name type="ordered locus">KRH_06420</name>
</gene>